<comment type="function">
    <text evidence="1">Condenses 4-methyl-5-(beta-hydroxyethyl)thiazole monophosphate (THZ-P) and 2-methyl-4-amino-5-hydroxymethyl pyrimidine pyrophosphate (HMP-PP) to form thiamine monophosphate (TMP).</text>
</comment>
<comment type="catalytic activity">
    <reaction evidence="1">
        <text>2-[(2R,5Z)-2-carboxy-4-methylthiazol-5(2H)-ylidene]ethyl phosphate + 4-amino-2-methyl-5-(diphosphooxymethyl)pyrimidine + 2 H(+) = thiamine phosphate + CO2 + diphosphate</text>
        <dbReference type="Rhea" id="RHEA:47844"/>
        <dbReference type="ChEBI" id="CHEBI:15378"/>
        <dbReference type="ChEBI" id="CHEBI:16526"/>
        <dbReference type="ChEBI" id="CHEBI:33019"/>
        <dbReference type="ChEBI" id="CHEBI:37575"/>
        <dbReference type="ChEBI" id="CHEBI:57841"/>
        <dbReference type="ChEBI" id="CHEBI:62899"/>
        <dbReference type="EC" id="2.5.1.3"/>
    </reaction>
</comment>
<comment type="catalytic activity">
    <reaction evidence="1">
        <text>2-(2-carboxy-4-methylthiazol-5-yl)ethyl phosphate + 4-amino-2-methyl-5-(diphosphooxymethyl)pyrimidine + 2 H(+) = thiamine phosphate + CO2 + diphosphate</text>
        <dbReference type="Rhea" id="RHEA:47848"/>
        <dbReference type="ChEBI" id="CHEBI:15378"/>
        <dbReference type="ChEBI" id="CHEBI:16526"/>
        <dbReference type="ChEBI" id="CHEBI:33019"/>
        <dbReference type="ChEBI" id="CHEBI:37575"/>
        <dbReference type="ChEBI" id="CHEBI:57841"/>
        <dbReference type="ChEBI" id="CHEBI:62890"/>
        <dbReference type="EC" id="2.5.1.3"/>
    </reaction>
</comment>
<comment type="catalytic activity">
    <reaction evidence="1">
        <text>4-methyl-5-(2-phosphooxyethyl)-thiazole + 4-amino-2-methyl-5-(diphosphooxymethyl)pyrimidine + H(+) = thiamine phosphate + diphosphate</text>
        <dbReference type="Rhea" id="RHEA:22328"/>
        <dbReference type="ChEBI" id="CHEBI:15378"/>
        <dbReference type="ChEBI" id="CHEBI:33019"/>
        <dbReference type="ChEBI" id="CHEBI:37575"/>
        <dbReference type="ChEBI" id="CHEBI:57841"/>
        <dbReference type="ChEBI" id="CHEBI:58296"/>
        <dbReference type="EC" id="2.5.1.3"/>
    </reaction>
</comment>
<comment type="cofactor">
    <cofactor evidence="1">
        <name>Mg(2+)</name>
        <dbReference type="ChEBI" id="CHEBI:18420"/>
    </cofactor>
    <text evidence="1">Binds 1 Mg(2+) ion per subunit.</text>
</comment>
<comment type="pathway">
    <text evidence="1">Cofactor biosynthesis; thiamine diphosphate biosynthesis; thiamine phosphate from 4-amino-2-methyl-5-diphosphomethylpyrimidine and 4-methyl-5-(2-phosphoethyl)-thiazole: step 1/1.</text>
</comment>
<comment type="similarity">
    <text evidence="1">Belongs to the thiamine-phosphate synthase family.</text>
</comment>
<comment type="sequence caution" evidence="2">
    <conflict type="erroneous initiation">
        <sequence resource="EMBL-CDS" id="ABG16559"/>
    </conflict>
</comment>
<reference key="1">
    <citation type="journal article" date="2006" name="J. Bacteriol.">
        <title>Complete genome sequence of Yersinia pestis strains Antiqua and Nepal516: evidence of gene reduction in an emerging pathogen.</title>
        <authorList>
            <person name="Chain P.S.G."/>
            <person name="Hu P."/>
            <person name="Malfatti S.A."/>
            <person name="Radnedge L."/>
            <person name="Larimer F."/>
            <person name="Vergez L.M."/>
            <person name="Worsham P."/>
            <person name="Chu M.C."/>
            <person name="Andersen G.L."/>
        </authorList>
    </citation>
    <scope>NUCLEOTIDE SEQUENCE [LARGE SCALE GENOMIC DNA]</scope>
    <source>
        <strain>Nepal516</strain>
    </source>
</reference>
<reference key="2">
    <citation type="submission" date="2009-04" db="EMBL/GenBank/DDBJ databases">
        <title>Yersinia pestis Nepal516A whole genome shotgun sequencing project.</title>
        <authorList>
            <person name="Plunkett G. III"/>
            <person name="Anderson B.D."/>
            <person name="Baumler D.J."/>
            <person name="Burland V."/>
            <person name="Cabot E.L."/>
            <person name="Glasner J.D."/>
            <person name="Mau B."/>
            <person name="Neeno-Eckwall E."/>
            <person name="Perna N.T."/>
            <person name="Munk A.C."/>
            <person name="Tapia R."/>
            <person name="Green L.D."/>
            <person name="Rogers Y.C."/>
            <person name="Detter J.C."/>
            <person name="Bruce D.C."/>
            <person name="Brettin T.S."/>
        </authorList>
    </citation>
    <scope>NUCLEOTIDE SEQUENCE [LARGE SCALE GENOMIC DNA]</scope>
    <source>
        <strain>Nepal516</strain>
    </source>
</reference>
<accession>Q1CN71</accession>
<accession>C4GNF3</accession>
<feature type="chain" id="PRO_0000336432" description="Thiamine-phosphate synthase">
    <location>
        <begin position="1"/>
        <end position="215"/>
    </location>
</feature>
<feature type="binding site" evidence="1">
    <location>
        <begin position="37"/>
        <end position="41"/>
    </location>
    <ligand>
        <name>4-amino-2-methyl-5-(diphosphooxymethyl)pyrimidine</name>
        <dbReference type="ChEBI" id="CHEBI:57841"/>
    </ligand>
</feature>
<feature type="binding site" evidence="1">
    <location>
        <position position="69"/>
    </location>
    <ligand>
        <name>4-amino-2-methyl-5-(diphosphooxymethyl)pyrimidine</name>
        <dbReference type="ChEBI" id="CHEBI:57841"/>
    </ligand>
</feature>
<feature type="binding site" evidence="1">
    <location>
        <position position="70"/>
    </location>
    <ligand>
        <name>Mg(2+)</name>
        <dbReference type="ChEBI" id="CHEBI:18420"/>
    </ligand>
</feature>
<feature type="binding site" evidence="1">
    <location>
        <position position="89"/>
    </location>
    <ligand>
        <name>Mg(2+)</name>
        <dbReference type="ChEBI" id="CHEBI:18420"/>
    </ligand>
</feature>
<feature type="binding site" evidence="1">
    <location>
        <position position="108"/>
    </location>
    <ligand>
        <name>4-amino-2-methyl-5-(diphosphooxymethyl)pyrimidine</name>
        <dbReference type="ChEBI" id="CHEBI:57841"/>
    </ligand>
</feature>
<feature type="binding site" evidence="1">
    <location>
        <begin position="134"/>
        <end position="136"/>
    </location>
    <ligand>
        <name>2-[(2R,5Z)-2-carboxy-4-methylthiazol-5(2H)-ylidene]ethyl phosphate</name>
        <dbReference type="ChEBI" id="CHEBI:62899"/>
    </ligand>
</feature>
<feature type="binding site" evidence="1">
    <location>
        <position position="137"/>
    </location>
    <ligand>
        <name>4-amino-2-methyl-5-(diphosphooxymethyl)pyrimidine</name>
        <dbReference type="ChEBI" id="CHEBI:57841"/>
    </ligand>
</feature>
<feature type="binding site" evidence="1">
    <location>
        <position position="166"/>
    </location>
    <ligand>
        <name>2-[(2R,5Z)-2-carboxy-4-methylthiazol-5(2H)-ylidene]ethyl phosphate</name>
        <dbReference type="ChEBI" id="CHEBI:62899"/>
    </ligand>
</feature>
<feature type="binding site" evidence="1">
    <location>
        <begin position="186"/>
        <end position="187"/>
    </location>
    <ligand>
        <name>2-[(2R,5Z)-2-carboxy-4-methylthiazol-5(2H)-ylidene]ethyl phosphate</name>
        <dbReference type="ChEBI" id="CHEBI:62899"/>
    </ligand>
</feature>
<proteinExistence type="inferred from homology"/>
<sequence length="215" mass="23275">MATPGFPSTEQRLGLYPVVDSLLWIERLLAAGVTTLQLRIKNADDAQVEQDIVAAIELGKRYQARLFINDYWQLAVKHGAYGVHLGQEDLEAADLAAIQQAGLRLGISTHDEHELAVAKTLRPSYIALGHIFPTQTKQMPSSPQGLASLSRQVKNTPDYPTVAIGGISIERVPHVLATGVGSVAVVSAITLASDWQRATAQLLHLIEGKELADEK</sequence>
<keyword id="KW-0460">Magnesium</keyword>
<keyword id="KW-0479">Metal-binding</keyword>
<keyword id="KW-0784">Thiamine biosynthesis</keyword>
<keyword id="KW-0808">Transferase</keyword>
<organism>
    <name type="scientific">Yersinia pestis bv. Antiqua (strain Nepal516)</name>
    <dbReference type="NCBI Taxonomy" id="377628"/>
    <lineage>
        <taxon>Bacteria</taxon>
        <taxon>Pseudomonadati</taxon>
        <taxon>Pseudomonadota</taxon>
        <taxon>Gammaproteobacteria</taxon>
        <taxon>Enterobacterales</taxon>
        <taxon>Yersiniaceae</taxon>
        <taxon>Yersinia</taxon>
    </lineage>
</organism>
<gene>
    <name evidence="1" type="primary">thiE</name>
    <name type="ordered locus">YPN_0226</name>
    <name type="ORF">YP516_0204</name>
</gene>
<dbReference type="EC" id="2.5.1.3" evidence="1"/>
<dbReference type="EMBL" id="CP000305">
    <property type="protein sequence ID" value="ABG16559.1"/>
    <property type="status" value="ALT_INIT"/>
    <property type="molecule type" value="Genomic_DNA"/>
</dbReference>
<dbReference type="EMBL" id="ACNQ01000004">
    <property type="protein sequence ID" value="EEO78477.1"/>
    <property type="molecule type" value="Genomic_DNA"/>
</dbReference>
<dbReference type="SMR" id="Q1CN71"/>
<dbReference type="KEGG" id="ypn:YPN_0226"/>
<dbReference type="HOGENOM" id="CLU_018272_3_3_6"/>
<dbReference type="UniPathway" id="UPA00060">
    <property type="reaction ID" value="UER00141"/>
</dbReference>
<dbReference type="Proteomes" id="UP000008936">
    <property type="component" value="Chromosome"/>
</dbReference>
<dbReference type="GO" id="GO:0005737">
    <property type="term" value="C:cytoplasm"/>
    <property type="evidence" value="ECO:0007669"/>
    <property type="project" value="TreeGrafter"/>
</dbReference>
<dbReference type="GO" id="GO:0000287">
    <property type="term" value="F:magnesium ion binding"/>
    <property type="evidence" value="ECO:0007669"/>
    <property type="project" value="UniProtKB-UniRule"/>
</dbReference>
<dbReference type="GO" id="GO:0004789">
    <property type="term" value="F:thiamine-phosphate diphosphorylase activity"/>
    <property type="evidence" value="ECO:0007669"/>
    <property type="project" value="UniProtKB-UniRule"/>
</dbReference>
<dbReference type="GO" id="GO:0009228">
    <property type="term" value="P:thiamine biosynthetic process"/>
    <property type="evidence" value="ECO:0007669"/>
    <property type="project" value="UniProtKB-KW"/>
</dbReference>
<dbReference type="GO" id="GO:0009229">
    <property type="term" value="P:thiamine diphosphate biosynthetic process"/>
    <property type="evidence" value="ECO:0007669"/>
    <property type="project" value="UniProtKB-UniRule"/>
</dbReference>
<dbReference type="CDD" id="cd00564">
    <property type="entry name" value="TMP_TenI"/>
    <property type="match status" value="1"/>
</dbReference>
<dbReference type="FunFam" id="3.20.20.70:FF:000064">
    <property type="entry name" value="Thiamine-phosphate synthase"/>
    <property type="match status" value="1"/>
</dbReference>
<dbReference type="Gene3D" id="3.20.20.70">
    <property type="entry name" value="Aldolase class I"/>
    <property type="match status" value="1"/>
</dbReference>
<dbReference type="HAMAP" id="MF_00097">
    <property type="entry name" value="TMP_synthase"/>
    <property type="match status" value="1"/>
</dbReference>
<dbReference type="InterPro" id="IPR013785">
    <property type="entry name" value="Aldolase_TIM"/>
</dbReference>
<dbReference type="InterPro" id="IPR036206">
    <property type="entry name" value="ThiamineP_synth_sf"/>
</dbReference>
<dbReference type="InterPro" id="IPR022998">
    <property type="entry name" value="ThiamineP_synth_TenI"/>
</dbReference>
<dbReference type="InterPro" id="IPR034291">
    <property type="entry name" value="TMP_synthase"/>
</dbReference>
<dbReference type="NCBIfam" id="NF002904">
    <property type="entry name" value="PRK03512.1"/>
    <property type="match status" value="1"/>
</dbReference>
<dbReference type="NCBIfam" id="TIGR00693">
    <property type="entry name" value="thiE"/>
    <property type="match status" value="1"/>
</dbReference>
<dbReference type="PANTHER" id="PTHR20857">
    <property type="entry name" value="THIAMINE-PHOSPHATE PYROPHOSPHORYLASE"/>
    <property type="match status" value="1"/>
</dbReference>
<dbReference type="PANTHER" id="PTHR20857:SF15">
    <property type="entry name" value="THIAMINE-PHOSPHATE SYNTHASE"/>
    <property type="match status" value="1"/>
</dbReference>
<dbReference type="Pfam" id="PF02581">
    <property type="entry name" value="TMP-TENI"/>
    <property type="match status" value="1"/>
</dbReference>
<dbReference type="SUPFAM" id="SSF51391">
    <property type="entry name" value="Thiamin phosphate synthase"/>
    <property type="match status" value="1"/>
</dbReference>
<evidence type="ECO:0000255" key="1">
    <source>
        <dbReference type="HAMAP-Rule" id="MF_00097"/>
    </source>
</evidence>
<evidence type="ECO:0000305" key="2"/>
<name>THIE_YERPN</name>
<protein>
    <recommendedName>
        <fullName evidence="1">Thiamine-phosphate synthase</fullName>
        <shortName evidence="1">TP synthase</shortName>
        <shortName evidence="1">TPS</shortName>
        <ecNumber evidence="1">2.5.1.3</ecNumber>
    </recommendedName>
    <alternativeName>
        <fullName evidence="1">Thiamine-phosphate pyrophosphorylase</fullName>
        <shortName evidence="1">TMP pyrophosphorylase</shortName>
        <shortName evidence="1">TMP-PPase</shortName>
    </alternativeName>
</protein>